<dbReference type="EMBL" id="FM242711">
    <property type="protein sequence ID" value="CAS03956.1"/>
    <property type="molecule type" value="Genomic_DNA"/>
</dbReference>
<dbReference type="RefSeq" id="WP_003728186.1">
    <property type="nucleotide sequence ID" value="NC_012488.1"/>
</dbReference>
<dbReference type="SMR" id="C1KXY3"/>
<dbReference type="KEGG" id="lmc:Lm4b_00165"/>
<dbReference type="HOGENOM" id="CLU_157169_0_0_9"/>
<dbReference type="GO" id="GO:0009295">
    <property type="term" value="C:nucleoid"/>
    <property type="evidence" value="ECO:0007669"/>
    <property type="project" value="UniProtKB-SubCell"/>
</dbReference>
<dbReference type="GO" id="GO:0006260">
    <property type="term" value="P:DNA replication"/>
    <property type="evidence" value="ECO:0007669"/>
    <property type="project" value="UniProtKB-UniRule"/>
</dbReference>
<dbReference type="HAMAP" id="MF_01159">
    <property type="entry name" value="YabA"/>
    <property type="match status" value="1"/>
</dbReference>
<dbReference type="InterPro" id="IPR010377">
    <property type="entry name" value="YabA"/>
</dbReference>
<dbReference type="NCBIfam" id="NF009643">
    <property type="entry name" value="PRK13169.1-4"/>
    <property type="match status" value="1"/>
</dbReference>
<dbReference type="NCBIfam" id="NF009644">
    <property type="entry name" value="PRK13169.1-5"/>
    <property type="match status" value="1"/>
</dbReference>
<dbReference type="Pfam" id="PF06156">
    <property type="entry name" value="YabA"/>
    <property type="match status" value="1"/>
</dbReference>
<dbReference type="PIRSF" id="PIRSF021439">
    <property type="entry name" value="DUF972"/>
    <property type="match status" value="1"/>
</dbReference>
<protein>
    <recommendedName>
        <fullName evidence="1">Replication initiation control protein YabA</fullName>
    </recommendedName>
</protein>
<evidence type="ECO:0000255" key="1">
    <source>
        <dbReference type="HAMAP-Rule" id="MF_01159"/>
    </source>
</evidence>
<proteinExistence type="inferred from homology"/>
<sequence>MDKKAIFDSVSNMEEQIGELYQQLGDLKTNLGEMLEENNRLNLENEHLRRRLSLTDEATPEPKAEIEAEHGVMAPNRKEAMQQMIELGEGYDNLVQLYKEGFHVCNVHFGSPRGNDEDCLFCLSLLNKK</sequence>
<accession>C1KXY3</accession>
<reference key="1">
    <citation type="journal article" date="2012" name="BMC Genomics">
        <title>Comparative genomics and transcriptomics of lineages I, II, and III strains of Listeria monocytogenes.</title>
        <authorList>
            <person name="Hain T."/>
            <person name="Ghai R."/>
            <person name="Billion A."/>
            <person name="Kuenne C.T."/>
            <person name="Steinweg C."/>
            <person name="Izar B."/>
            <person name="Mohamed W."/>
            <person name="Mraheil M."/>
            <person name="Domann E."/>
            <person name="Schaffrath S."/>
            <person name="Karst U."/>
            <person name="Goesmann A."/>
            <person name="Oehm S."/>
            <person name="Puhler A."/>
            <person name="Merkl R."/>
            <person name="Vorwerk S."/>
            <person name="Glaser P."/>
            <person name="Garrido P."/>
            <person name="Rusniok C."/>
            <person name="Buchrieser C."/>
            <person name="Goebel W."/>
            <person name="Chakraborty T."/>
        </authorList>
    </citation>
    <scope>NUCLEOTIDE SEQUENCE [LARGE SCALE GENOMIC DNA]</scope>
    <source>
        <strain>CLIP80459</strain>
    </source>
</reference>
<feature type="chain" id="PRO_1000213701" description="Replication initiation control protein YabA">
    <location>
        <begin position="1"/>
        <end position="129"/>
    </location>
</feature>
<feature type="binding site" evidence="1">
    <location>
        <position position="103"/>
    </location>
    <ligand>
        <name>Zn(2+)</name>
        <dbReference type="ChEBI" id="CHEBI:29105"/>
    </ligand>
</feature>
<feature type="binding site" evidence="1">
    <location>
        <position position="105"/>
    </location>
    <ligand>
        <name>Zn(2+)</name>
        <dbReference type="ChEBI" id="CHEBI:29105"/>
    </ligand>
</feature>
<feature type="binding site" evidence="1">
    <location>
        <position position="119"/>
    </location>
    <ligand>
        <name>Zn(2+)</name>
        <dbReference type="ChEBI" id="CHEBI:29105"/>
    </ligand>
</feature>
<feature type="binding site" evidence="1">
    <location>
        <position position="122"/>
    </location>
    <ligand>
        <name>Zn(2+)</name>
        <dbReference type="ChEBI" id="CHEBI:29105"/>
    </ligand>
</feature>
<gene>
    <name evidence="1" type="primary">yabA</name>
    <name type="ordered locus">Lm4b_00165</name>
</gene>
<keyword id="KW-0963">Cytoplasm</keyword>
<keyword id="KW-0235">DNA replication</keyword>
<keyword id="KW-0236">DNA replication inhibitor</keyword>
<keyword id="KW-0479">Metal-binding</keyword>
<keyword id="KW-0862">Zinc</keyword>
<name>YABA_LISMC</name>
<comment type="function">
    <text evidence="1">Involved in control of chromosome replication initiation. Inhibits the cooperative binding of DnaA to the oriC region, thus negatively regulating initiation of chromosome replication. Inhibits the ability of DnaA-ATP to form a helix on DNA; does not disassemble preformed DnaA-DNA helices. Decreases the residence time of DnaA on the chromosome at its binding sites (oriC, replication forks and promoter-binding sites). Tethers DnaA to the replication machinery via the DNA polymerase beta sliding clamp subunit (dnaN). Associates with oriC and other DnaA targets on the chromosome in a DnaA-dependent manner.</text>
</comment>
<comment type="cofactor">
    <cofactor evidence="1">
        <name>Zn(2+)</name>
        <dbReference type="ChEBI" id="CHEBI:29105"/>
    </cofactor>
    <text evidence="1">Binds 1 zinc ion per subunit.</text>
</comment>
<comment type="subunit">
    <text evidence="1">Homotetramer. Interacts with both DnaA and DnaN, acting as a bridge between these two proteins.</text>
</comment>
<comment type="subcellular location">
    <subcellularLocation>
        <location evidence="1">Cytoplasm</location>
        <location evidence="1">Nucleoid</location>
    </subcellularLocation>
    <text evidence="1">Localizes in tight foci, which correspond to the replisome at mid-cell throughout the cell cycle.</text>
</comment>
<comment type="similarity">
    <text evidence="1">Belongs to the YabA family.</text>
</comment>
<organism>
    <name type="scientific">Listeria monocytogenes serotype 4b (strain CLIP80459)</name>
    <dbReference type="NCBI Taxonomy" id="568819"/>
    <lineage>
        <taxon>Bacteria</taxon>
        <taxon>Bacillati</taxon>
        <taxon>Bacillota</taxon>
        <taxon>Bacilli</taxon>
        <taxon>Bacillales</taxon>
        <taxon>Listeriaceae</taxon>
        <taxon>Listeria</taxon>
    </lineage>
</organism>